<comment type="function">
    <text evidence="1">Catalyzes the complicated ring closure reaction between the two acyclic compounds 1-deoxy-D-xylulose-5-phosphate (DXP) and 3-amino-2-oxopropyl phosphate (1-amino-acetone-3-phosphate or AAP) to form pyridoxine 5'-phosphate (PNP) and inorganic phosphate.</text>
</comment>
<comment type="catalytic activity">
    <reaction evidence="1">
        <text>3-amino-2-oxopropyl phosphate + 1-deoxy-D-xylulose 5-phosphate = pyridoxine 5'-phosphate + phosphate + 2 H2O + H(+)</text>
        <dbReference type="Rhea" id="RHEA:15265"/>
        <dbReference type="ChEBI" id="CHEBI:15377"/>
        <dbReference type="ChEBI" id="CHEBI:15378"/>
        <dbReference type="ChEBI" id="CHEBI:43474"/>
        <dbReference type="ChEBI" id="CHEBI:57279"/>
        <dbReference type="ChEBI" id="CHEBI:57792"/>
        <dbReference type="ChEBI" id="CHEBI:58589"/>
        <dbReference type="EC" id="2.6.99.2"/>
    </reaction>
</comment>
<comment type="pathway">
    <text evidence="1">Cofactor biosynthesis; pyridoxine 5'-phosphate biosynthesis; pyridoxine 5'-phosphate from D-erythrose 4-phosphate: step 5/5.</text>
</comment>
<comment type="subunit">
    <text evidence="1">Homooctamer; tetramer of dimers.</text>
</comment>
<comment type="subcellular location">
    <subcellularLocation>
        <location evidence="1">Cytoplasm</location>
    </subcellularLocation>
</comment>
<comment type="similarity">
    <text evidence="1">Belongs to the PNP synthase family.</text>
</comment>
<comment type="sequence caution" evidence="2">
    <conflict type="erroneous initiation">
        <sequence resource="EMBL-CDS" id="ABB75056"/>
    </conflict>
</comment>
<evidence type="ECO:0000255" key="1">
    <source>
        <dbReference type="HAMAP-Rule" id="MF_00279"/>
    </source>
</evidence>
<evidence type="ECO:0000305" key="2"/>
<reference key="1">
    <citation type="submission" date="2005-08" db="EMBL/GenBank/DDBJ databases">
        <title>Complete sequence of chromosome 1 of Nitrosospira multiformis ATCC 25196.</title>
        <authorList>
            <person name="Copeland A."/>
            <person name="Lucas S."/>
            <person name="Lapidus A."/>
            <person name="Barry K."/>
            <person name="Detter J.C."/>
            <person name="Glavina T."/>
            <person name="Hammon N."/>
            <person name="Israni S."/>
            <person name="Pitluck S."/>
            <person name="Chain P."/>
            <person name="Malfatti S."/>
            <person name="Shin M."/>
            <person name="Vergez L."/>
            <person name="Schmutz J."/>
            <person name="Larimer F."/>
            <person name="Land M."/>
            <person name="Hauser L."/>
            <person name="Kyrpides N."/>
            <person name="Lykidis A."/>
            <person name="Richardson P."/>
        </authorList>
    </citation>
    <scope>NUCLEOTIDE SEQUENCE [LARGE SCALE GENOMIC DNA]</scope>
    <source>
        <strain>ATCC 25196 / NCIMB 11849 / C 71</strain>
    </source>
</reference>
<keyword id="KW-0963">Cytoplasm</keyword>
<keyword id="KW-0664">Pyridoxine biosynthesis</keyword>
<keyword id="KW-1185">Reference proteome</keyword>
<keyword id="KW-0808">Transferase</keyword>
<gene>
    <name evidence="1" type="primary">pdxJ</name>
    <name type="ordered locus">Nmul_A1759</name>
</gene>
<proteinExistence type="inferred from homology"/>
<sequence length="241" mass="26347">MIKLGVNIDHVATLRQARGTTYPDPIEAALIAESAGADAITLHLREDRRHIQDRDVEILRGALKTRMNLESAVTDEMIGFALRIKPHDICLVPERREELTTEGGLDVARHFEQVQRACHRLAEAGIRVSLFVDAEPAQIDASVEAGAPVIEIHTGHYADAQTTDEQQGELERVRAAVSKGLNHGLTVNAGHGLHYLNVQAIAAIPGVSELNIGHAIVARALFVGFERAVREMKNLMLEACK</sequence>
<feature type="chain" id="PRO_0000231822" description="Pyridoxine 5'-phosphate synthase">
    <location>
        <begin position="1"/>
        <end position="241"/>
    </location>
</feature>
<feature type="active site" description="Proton acceptor" evidence="1">
    <location>
        <position position="43"/>
    </location>
</feature>
<feature type="active site" description="Proton acceptor" evidence="1">
    <location>
        <position position="70"/>
    </location>
</feature>
<feature type="active site" description="Proton donor" evidence="1">
    <location>
        <position position="191"/>
    </location>
</feature>
<feature type="binding site" evidence="1">
    <location>
        <position position="7"/>
    </location>
    <ligand>
        <name>3-amino-2-oxopropyl phosphate</name>
        <dbReference type="ChEBI" id="CHEBI:57279"/>
    </ligand>
</feature>
<feature type="binding site" evidence="1">
    <location>
        <begin position="9"/>
        <end position="10"/>
    </location>
    <ligand>
        <name>1-deoxy-D-xylulose 5-phosphate</name>
        <dbReference type="ChEBI" id="CHEBI:57792"/>
    </ligand>
</feature>
<feature type="binding site" evidence="1">
    <location>
        <position position="18"/>
    </location>
    <ligand>
        <name>3-amino-2-oxopropyl phosphate</name>
        <dbReference type="ChEBI" id="CHEBI:57279"/>
    </ligand>
</feature>
<feature type="binding site" evidence="1">
    <location>
        <position position="45"/>
    </location>
    <ligand>
        <name>1-deoxy-D-xylulose 5-phosphate</name>
        <dbReference type="ChEBI" id="CHEBI:57792"/>
    </ligand>
</feature>
<feature type="binding site" evidence="1">
    <location>
        <position position="50"/>
    </location>
    <ligand>
        <name>1-deoxy-D-xylulose 5-phosphate</name>
        <dbReference type="ChEBI" id="CHEBI:57792"/>
    </ligand>
</feature>
<feature type="binding site" evidence="1">
    <location>
        <position position="100"/>
    </location>
    <ligand>
        <name>1-deoxy-D-xylulose 5-phosphate</name>
        <dbReference type="ChEBI" id="CHEBI:57792"/>
    </ligand>
</feature>
<feature type="binding site" evidence="1">
    <location>
        <position position="192"/>
    </location>
    <ligand>
        <name>3-amino-2-oxopropyl phosphate</name>
        <dbReference type="ChEBI" id="CHEBI:57279"/>
    </ligand>
</feature>
<feature type="binding site" evidence="1">
    <location>
        <begin position="213"/>
        <end position="214"/>
    </location>
    <ligand>
        <name>3-amino-2-oxopropyl phosphate</name>
        <dbReference type="ChEBI" id="CHEBI:57279"/>
    </ligand>
</feature>
<feature type="site" description="Transition state stabilizer" evidence="1">
    <location>
        <position position="151"/>
    </location>
</feature>
<accession>Q2Y865</accession>
<protein>
    <recommendedName>
        <fullName evidence="1">Pyridoxine 5'-phosphate synthase</fullName>
        <shortName evidence="1">PNP synthase</shortName>
        <ecNumber evidence="1">2.6.99.2</ecNumber>
    </recommendedName>
</protein>
<dbReference type="EC" id="2.6.99.2" evidence="1"/>
<dbReference type="EMBL" id="CP000103">
    <property type="protein sequence ID" value="ABB75056.1"/>
    <property type="status" value="ALT_INIT"/>
    <property type="molecule type" value="Genomic_DNA"/>
</dbReference>
<dbReference type="RefSeq" id="WP_041353082.1">
    <property type="nucleotide sequence ID" value="NC_007614.1"/>
</dbReference>
<dbReference type="SMR" id="Q2Y865"/>
<dbReference type="STRING" id="323848.Nmul_A1759"/>
<dbReference type="KEGG" id="nmu:Nmul_A1759"/>
<dbReference type="eggNOG" id="COG0854">
    <property type="taxonomic scope" value="Bacteria"/>
</dbReference>
<dbReference type="HOGENOM" id="CLU_074563_0_0_4"/>
<dbReference type="OrthoDB" id="9806590at2"/>
<dbReference type="UniPathway" id="UPA00244">
    <property type="reaction ID" value="UER00313"/>
</dbReference>
<dbReference type="Proteomes" id="UP000002718">
    <property type="component" value="Chromosome"/>
</dbReference>
<dbReference type="GO" id="GO:0005829">
    <property type="term" value="C:cytosol"/>
    <property type="evidence" value="ECO:0007669"/>
    <property type="project" value="TreeGrafter"/>
</dbReference>
<dbReference type="GO" id="GO:0033856">
    <property type="term" value="F:pyridoxine 5'-phosphate synthase activity"/>
    <property type="evidence" value="ECO:0007669"/>
    <property type="project" value="UniProtKB-EC"/>
</dbReference>
<dbReference type="GO" id="GO:0008615">
    <property type="term" value="P:pyridoxine biosynthetic process"/>
    <property type="evidence" value="ECO:0007669"/>
    <property type="project" value="UniProtKB-UniRule"/>
</dbReference>
<dbReference type="CDD" id="cd00003">
    <property type="entry name" value="PNPsynthase"/>
    <property type="match status" value="1"/>
</dbReference>
<dbReference type="FunFam" id="3.20.20.70:FF:000042">
    <property type="entry name" value="Pyridoxine 5'-phosphate synthase"/>
    <property type="match status" value="1"/>
</dbReference>
<dbReference type="Gene3D" id="3.20.20.70">
    <property type="entry name" value="Aldolase class I"/>
    <property type="match status" value="1"/>
</dbReference>
<dbReference type="HAMAP" id="MF_00279">
    <property type="entry name" value="PdxJ"/>
    <property type="match status" value="1"/>
</dbReference>
<dbReference type="InterPro" id="IPR013785">
    <property type="entry name" value="Aldolase_TIM"/>
</dbReference>
<dbReference type="InterPro" id="IPR004569">
    <property type="entry name" value="PyrdxlP_synth_PdxJ"/>
</dbReference>
<dbReference type="InterPro" id="IPR036130">
    <property type="entry name" value="Pyridoxine-5'_phos_synth"/>
</dbReference>
<dbReference type="NCBIfam" id="TIGR00559">
    <property type="entry name" value="pdxJ"/>
    <property type="match status" value="1"/>
</dbReference>
<dbReference type="NCBIfam" id="NF003623">
    <property type="entry name" value="PRK05265.1-1"/>
    <property type="match status" value="1"/>
</dbReference>
<dbReference type="NCBIfam" id="NF003625">
    <property type="entry name" value="PRK05265.1-3"/>
    <property type="match status" value="1"/>
</dbReference>
<dbReference type="NCBIfam" id="NF003627">
    <property type="entry name" value="PRK05265.1-5"/>
    <property type="match status" value="1"/>
</dbReference>
<dbReference type="PANTHER" id="PTHR30456">
    <property type="entry name" value="PYRIDOXINE 5'-PHOSPHATE SYNTHASE"/>
    <property type="match status" value="1"/>
</dbReference>
<dbReference type="PANTHER" id="PTHR30456:SF0">
    <property type="entry name" value="PYRIDOXINE 5'-PHOSPHATE SYNTHASE"/>
    <property type="match status" value="1"/>
</dbReference>
<dbReference type="Pfam" id="PF03740">
    <property type="entry name" value="PdxJ"/>
    <property type="match status" value="1"/>
</dbReference>
<dbReference type="SUPFAM" id="SSF63892">
    <property type="entry name" value="Pyridoxine 5'-phosphate synthase"/>
    <property type="match status" value="1"/>
</dbReference>
<organism>
    <name type="scientific">Nitrosospira multiformis (strain ATCC 25196 / NCIMB 11849 / C 71)</name>
    <dbReference type="NCBI Taxonomy" id="323848"/>
    <lineage>
        <taxon>Bacteria</taxon>
        <taxon>Pseudomonadati</taxon>
        <taxon>Pseudomonadota</taxon>
        <taxon>Betaproteobacteria</taxon>
        <taxon>Nitrosomonadales</taxon>
        <taxon>Nitrosomonadaceae</taxon>
        <taxon>Nitrosospira</taxon>
    </lineage>
</organism>
<name>PDXJ_NITMU</name>